<feature type="chain" id="PRO_0000192200" description="33 kDa chaperonin">
    <location>
        <begin position="1"/>
        <end position="293"/>
    </location>
</feature>
<feature type="disulfide bond" description="Redox-active" evidence="1">
    <location>
        <begin position="238"/>
        <end position="240"/>
    </location>
</feature>
<feature type="disulfide bond" description="Redox-active" evidence="1">
    <location>
        <begin position="271"/>
        <end position="274"/>
    </location>
</feature>
<protein>
    <recommendedName>
        <fullName evidence="1">33 kDa chaperonin</fullName>
    </recommendedName>
    <alternativeName>
        <fullName evidence="1">Heat shock protein 33 homolog</fullName>
        <shortName evidence="1">HSP33</shortName>
    </alternativeName>
</protein>
<evidence type="ECO:0000255" key="1">
    <source>
        <dbReference type="HAMAP-Rule" id="MF_00117"/>
    </source>
</evidence>
<keyword id="KW-0143">Chaperone</keyword>
<keyword id="KW-0963">Cytoplasm</keyword>
<keyword id="KW-1015">Disulfide bond</keyword>
<keyword id="KW-0676">Redox-active center</keyword>
<keyword id="KW-0862">Zinc</keyword>
<accession>P64400</accession>
<accession>Q99W91</accession>
<comment type="function">
    <text evidence="1">Redox regulated molecular chaperone. Protects both thermally unfolding and oxidatively damaged proteins from irreversible aggregation. Plays an important role in the bacterial defense system toward oxidative stress.</text>
</comment>
<comment type="subcellular location">
    <subcellularLocation>
        <location evidence="1">Cytoplasm</location>
    </subcellularLocation>
</comment>
<comment type="PTM">
    <text evidence="1">Under oxidizing conditions two disulfide bonds are formed involving the reactive cysteines. Under reducing conditions zinc is bound to the reactive cysteines and the protein is inactive.</text>
</comment>
<comment type="similarity">
    <text evidence="1">Belongs to the HSP33 family.</text>
</comment>
<reference key="1">
    <citation type="journal article" date="2001" name="Lancet">
        <title>Whole genome sequencing of meticillin-resistant Staphylococcus aureus.</title>
        <authorList>
            <person name="Kuroda M."/>
            <person name="Ohta T."/>
            <person name="Uchiyama I."/>
            <person name="Baba T."/>
            <person name="Yuzawa H."/>
            <person name="Kobayashi I."/>
            <person name="Cui L."/>
            <person name="Oguchi A."/>
            <person name="Aoki K."/>
            <person name="Nagai Y."/>
            <person name="Lian J.-Q."/>
            <person name="Ito T."/>
            <person name="Kanamori M."/>
            <person name="Matsumaru H."/>
            <person name="Maruyama A."/>
            <person name="Murakami H."/>
            <person name="Hosoyama A."/>
            <person name="Mizutani-Ui Y."/>
            <person name="Takahashi N.K."/>
            <person name="Sawano T."/>
            <person name="Inoue R."/>
            <person name="Kaito C."/>
            <person name="Sekimizu K."/>
            <person name="Hirakawa H."/>
            <person name="Kuhara S."/>
            <person name="Goto S."/>
            <person name="Yabuzaki J."/>
            <person name="Kanehisa M."/>
            <person name="Yamashita A."/>
            <person name="Oshima K."/>
            <person name="Furuya K."/>
            <person name="Yoshino C."/>
            <person name="Shiba T."/>
            <person name="Hattori M."/>
            <person name="Ogasawara N."/>
            <person name="Hayashi H."/>
            <person name="Hiramatsu K."/>
        </authorList>
    </citation>
    <scope>NUCLEOTIDE SEQUENCE [LARGE SCALE GENOMIC DNA]</scope>
    <source>
        <strain>Mu50 / ATCC 700699</strain>
    </source>
</reference>
<sequence>MTHDYIVKALAFDGEIRAYAALTTETVQEAQTRHYTWPTASAAMGRTMTATAMMGAMLKGDQKLTVTVDGQGPIGRIIADANAKGEVRAYVDHPQTHFPLNEQGKLDVRRAVGTNGSIIVVKDVGMKDYFSGASPIVSGELGEDFTYYYATSEQTPSSVGLGVLVNPDNTIKAAGGFIIQVMPGAKDETISKLEKAISEMTPVSKLIEQGLTPEGLLNEILGEDHVQILEKMPVQFECNCSHEKFLNAIKGLGEAEIQNMIKEDHGAEAVCHFCGNKYKYTEEELNVLLESLA</sequence>
<organism>
    <name type="scientific">Staphylococcus aureus (strain Mu50 / ATCC 700699)</name>
    <dbReference type="NCBI Taxonomy" id="158878"/>
    <lineage>
        <taxon>Bacteria</taxon>
        <taxon>Bacillati</taxon>
        <taxon>Bacillota</taxon>
        <taxon>Bacilli</taxon>
        <taxon>Bacillales</taxon>
        <taxon>Staphylococcaceae</taxon>
        <taxon>Staphylococcus</taxon>
    </lineage>
</organism>
<gene>
    <name evidence="1" type="primary">hslO</name>
    <name type="ordered locus">SAV0512</name>
</gene>
<name>HSLO_STAAM</name>
<dbReference type="EMBL" id="BA000017">
    <property type="protein sequence ID" value="BAB56674.1"/>
    <property type="molecule type" value="Genomic_DNA"/>
</dbReference>
<dbReference type="RefSeq" id="WP_000148598.1">
    <property type="nucleotide sequence ID" value="NC_002758.2"/>
</dbReference>
<dbReference type="SMR" id="P64400"/>
<dbReference type="KEGG" id="sav:SAV0512"/>
<dbReference type="HOGENOM" id="CLU_054493_1_0_9"/>
<dbReference type="PhylomeDB" id="P64400"/>
<dbReference type="Proteomes" id="UP000002481">
    <property type="component" value="Chromosome"/>
</dbReference>
<dbReference type="GO" id="GO:0005737">
    <property type="term" value="C:cytoplasm"/>
    <property type="evidence" value="ECO:0007669"/>
    <property type="project" value="UniProtKB-SubCell"/>
</dbReference>
<dbReference type="GO" id="GO:0044183">
    <property type="term" value="F:protein folding chaperone"/>
    <property type="evidence" value="ECO:0007669"/>
    <property type="project" value="TreeGrafter"/>
</dbReference>
<dbReference type="GO" id="GO:0051082">
    <property type="term" value="F:unfolded protein binding"/>
    <property type="evidence" value="ECO:0007669"/>
    <property type="project" value="UniProtKB-UniRule"/>
</dbReference>
<dbReference type="GO" id="GO:0042026">
    <property type="term" value="P:protein refolding"/>
    <property type="evidence" value="ECO:0007669"/>
    <property type="project" value="TreeGrafter"/>
</dbReference>
<dbReference type="CDD" id="cd00498">
    <property type="entry name" value="Hsp33"/>
    <property type="match status" value="1"/>
</dbReference>
<dbReference type="Gene3D" id="3.55.30.10">
    <property type="entry name" value="Hsp33 domain"/>
    <property type="match status" value="1"/>
</dbReference>
<dbReference type="Gene3D" id="3.90.1280.10">
    <property type="entry name" value="HSP33 redox switch-like"/>
    <property type="match status" value="1"/>
</dbReference>
<dbReference type="HAMAP" id="MF_00117">
    <property type="entry name" value="HslO"/>
    <property type="match status" value="1"/>
</dbReference>
<dbReference type="InterPro" id="IPR000397">
    <property type="entry name" value="Heat_shock_Hsp33"/>
</dbReference>
<dbReference type="InterPro" id="IPR016154">
    <property type="entry name" value="Heat_shock_Hsp33_C"/>
</dbReference>
<dbReference type="InterPro" id="IPR016153">
    <property type="entry name" value="Heat_shock_Hsp33_N"/>
</dbReference>
<dbReference type="NCBIfam" id="NF001033">
    <property type="entry name" value="PRK00114.1"/>
    <property type="match status" value="1"/>
</dbReference>
<dbReference type="PANTHER" id="PTHR30111">
    <property type="entry name" value="33 KDA CHAPERONIN"/>
    <property type="match status" value="1"/>
</dbReference>
<dbReference type="PANTHER" id="PTHR30111:SF1">
    <property type="entry name" value="33 KDA CHAPERONIN"/>
    <property type="match status" value="1"/>
</dbReference>
<dbReference type="Pfam" id="PF01430">
    <property type="entry name" value="HSP33"/>
    <property type="match status" value="1"/>
</dbReference>
<dbReference type="PIRSF" id="PIRSF005261">
    <property type="entry name" value="Heat_shock_Hsp33"/>
    <property type="match status" value="1"/>
</dbReference>
<dbReference type="SUPFAM" id="SSF64397">
    <property type="entry name" value="Hsp33 domain"/>
    <property type="match status" value="1"/>
</dbReference>
<dbReference type="SUPFAM" id="SSF118352">
    <property type="entry name" value="HSP33 redox switch-like"/>
    <property type="match status" value="1"/>
</dbReference>
<proteinExistence type="inferred from homology"/>